<proteinExistence type="evidence at protein level"/>
<protein>
    <recommendedName>
        <fullName>Cadherin-18</fullName>
    </recommendedName>
    <alternativeName>
        <fullName>Cadherin-14</fullName>
    </alternativeName>
</protein>
<comment type="function">
    <text>Cadherins are calcium-dependent cell adhesion proteins. They preferentially interact with themselves in a homophilic manner in connecting cells; cadherins may thus contribute to the sorting of heterogeneous cell types.</text>
</comment>
<comment type="subcellular location">
    <subcellularLocation>
        <location>Cell membrane</location>
        <topology>Single-pass type I membrane protein</topology>
    </subcellularLocation>
</comment>
<comment type="alternative products">
    <event type="alternative splicing"/>
    <isoform>
        <id>Q13634-1</id>
        <name>1</name>
        <sequence type="displayed"/>
    </isoform>
    <isoform>
        <id>Q13634-2</id>
        <name>2</name>
        <sequence type="described" ref="VSP_042308"/>
    </isoform>
</comment>
<comment type="domain">
    <text evidence="1">Three calcium ions are usually bound at the interface of each cadherin domain and rigidify the connections, imparting a strong curvature to the full-length ectodomain.</text>
</comment>
<keyword id="KW-0025">Alternative splicing</keyword>
<keyword id="KW-0106">Calcium</keyword>
<keyword id="KW-0130">Cell adhesion</keyword>
<keyword id="KW-1003">Cell membrane</keyword>
<keyword id="KW-0165">Cleavage on pair of basic residues</keyword>
<keyword id="KW-0325">Glycoprotein</keyword>
<keyword id="KW-0472">Membrane</keyword>
<keyword id="KW-0479">Metal-binding</keyword>
<keyword id="KW-0597">Phosphoprotein</keyword>
<keyword id="KW-1267">Proteomics identification</keyword>
<keyword id="KW-1185">Reference proteome</keyword>
<keyword id="KW-0677">Repeat</keyword>
<keyword id="KW-0732">Signal</keyword>
<keyword id="KW-0812">Transmembrane</keyword>
<keyword id="KW-1133">Transmembrane helix</keyword>
<name>CAD18_HUMAN</name>
<sequence length="790" mass="88073">MKITSTSCICPVLVCLCFVQRCYGTAHHSSIKVMRNQTKHIEGETEVHHRPKRGWVWNQFFVLEEHMGPDPQYVGKLHSNSDKGDGSVKYILTGEGAGTIFIIDDTTGDIHSTKSLDREQKTHYVLHAQAIDRRTNKPLEPESEFIIKVQDINDNAPKFTDGPYIVTVPEMSDMGTSVLQVTATDADDPTYGNSARVVYSILQGQPYFSVDPKTGVIRTALHNMDREAREHYSVVIQAKDMAGQVGGLSGSTTVNITLTDVNDNPPRFPQKHYQLYVPESAQVGSAVGKIKANDADTGSNADMTYSIINGDGMGIFSISTDKETREGILSLKKPLNYEKKKSYTLNIEGANTHLDFRFSHLGPFKDATMLKIIVGDVDEPPLFSMPSYLMEVYENAKIGTVVGTVLAQDPDSTNSLVRYFINYNVEDDRFFNIDANTGTIRTTKVLDREETPWYNITVTASEIDNPDLLSHVTVGIRVLDVNDNPPELAREYDIIVCENSKPGQVIHTISATDKDDFANGPRFNFFLDERLPVNPNFTLKDNEDNTASILTRRRRFSRTVQDVYYLPIMISDGGIPSLSSSSTLTIRVCACERDGRVRTCHAEAFLSSAGLSTGALIAILLCVLILLAIVVLFITLRRSKKEPLIISEEDVRENVVTYDDEGGGEEDTEAFDITALRNPSAAEELKYRRDIRPEVKLTPRHQTSSTLESIDVQEFIKQRLAEADLDPSVPPYDSLQTYAYEGQRSEAGSISSLDSATTQSDQDYHYLGDWGPEFKKLAELYGEIESERTT</sequence>
<feature type="signal peptide" evidence="3">
    <location>
        <begin position="1"/>
        <end position="24"/>
    </location>
</feature>
<feature type="propeptide" id="PRO_0000003815" evidence="3">
    <location>
        <begin position="25"/>
        <end position="53"/>
    </location>
</feature>
<feature type="chain" id="PRO_0000003816" description="Cadherin-18">
    <location>
        <begin position="54"/>
        <end position="790"/>
    </location>
</feature>
<feature type="topological domain" description="Extracellular" evidence="3">
    <location>
        <begin position="54"/>
        <end position="608"/>
    </location>
</feature>
<feature type="transmembrane region" description="Helical" evidence="3">
    <location>
        <begin position="609"/>
        <end position="636"/>
    </location>
</feature>
<feature type="topological domain" description="Cytoplasmic" evidence="3">
    <location>
        <begin position="637"/>
        <end position="790"/>
    </location>
</feature>
<feature type="domain" description="Cadherin 1" evidence="4">
    <location>
        <begin position="54"/>
        <end position="159"/>
    </location>
</feature>
<feature type="domain" description="Cadherin 2" evidence="4">
    <location>
        <begin position="160"/>
        <end position="268"/>
    </location>
</feature>
<feature type="domain" description="Cadherin 3" evidence="4">
    <location>
        <begin position="269"/>
        <end position="383"/>
    </location>
</feature>
<feature type="domain" description="Cadherin 4" evidence="4">
    <location>
        <begin position="384"/>
        <end position="486"/>
    </location>
</feature>
<feature type="domain" description="Cadherin 5" evidence="4">
    <location>
        <begin position="487"/>
        <end position="608"/>
    </location>
</feature>
<feature type="modified residue" description="Phosphoserine" evidence="2">
    <location>
        <position position="786"/>
    </location>
</feature>
<feature type="glycosylation site" description="N-linked (GlcNAc...) asparagine" evidence="3">
    <location>
        <position position="36"/>
    </location>
</feature>
<feature type="glycosylation site" description="N-linked (GlcNAc...) asparagine" evidence="3">
    <location>
        <position position="255"/>
    </location>
</feature>
<feature type="glycosylation site" description="N-linked (GlcNAc...) asparagine" evidence="3">
    <location>
        <position position="455"/>
    </location>
</feature>
<feature type="glycosylation site" description="N-linked (GlcNAc...) asparagine" evidence="3">
    <location>
        <position position="536"/>
    </location>
</feature>
<feature type="splice variant" id="VSP_042308" description="In isoform 2." evidence="5">
    <original>DNTASILTRRRRFSRTVQDVYYLPIMISDGGIPSLSSSSTLTIRVCACERDGRVRTCHAEAFLSSAGLSTGALIAILLCVLILLAIVVLFITLRRSKKEPLIISEEDVRENVVTYDDEGGGEEDTEAFDITALRNPSAAEELKYRRDIRPEVKLTPRHQTSSTLESIDVQEFIKQRLAEADLDPSVPPYDSLQTYAYEGQRSEAGSISSLDSATTQSDQDYHYLGDWGPEFKKLAELYGEIESERTT</original>
    <variation>AAAPSPSGFVHAREMGVCGPAMQKPSCPRLV</variation>
    <location>
        <begin position="544"/>
        <end position="790"/>
    </location>
</feature>
<feature type="sequence conflict" description="In Ref. 5; AAH31051." evidence="6" ref="5">
    <original>R</original>
    <variation>G</variation>
    <location>
        <position position="226"/>
    </location>
</feature>
<feature type="sequence conflict" description="In Ref. 5; AAH31051." evidence="6" ref="5">
    <original>P</original>
    <variation>T</variation>
    <location>
        <position position="265"/>
    </location>
</feature>
<feature type="sequence conflict" description="In Ref. 5; AAH31051." evidence="6" ref="5">
    <original>T</original>
    <variation>I</variation>
    <location>
        <position position="413"/>
    </location>
</feature>
<feature type="sequence conflict" description="In Ref. 5; AAH31051." evidence="6" ref="5">
    <original>E</original>
    <variation>G</variation>
    <location>
        <position position="669"/>
    </location>
</feature>
<gene>
    <name type="primary">CDH18</name>
    <name type="synonym">CDH14</name>
</gene>
<accession>Q13634</accession>
<accession>A8K0I2</accession>
<accession>B4DHG6</accession>
<accession>Q8N5Z2</accession>
<evidence type="ECO:0000250" key="1"/>
<evidence type="ECO:0000250" key="2">
    <source>
        <dbReference type="UniProtKB" id="P97326"/>
    </source>
</evidence>
<evidence type="ECO:0000255" key="3"/>
<evidence type="ECO:0000255" key="4">
    <source>
        <dbReference type="PROSITE-ProRule" id="PRU00043"/>
    </source>
</evidence>
<evidence type="ECO:0000303" key="5">
    <source>
    </source>
</evidence>
<evidence type="ECO:0000305" key="6"/>
<dbReference type="EMBL" id="U59325">
    <property type="protein sequence ID" value="AAB02933.1"/>
    <property type="molecule type" value="mRNA"/>
</dbReference>
<dbReference type="EMBL" id="AK289547">
    <property type="protein sequence ID" value="BAF82236.1"/>
    <property type="molecule type" value="mRNA"/>
</dbReference>
<dbReference type="EMBL" id="AK295087">
    <property type="protein sequence ID" value="BAG58128.1"/>
    <property type="molecule type" value="mRNA"/>
</dbReference>
<dbReference type="EMBL" id="AC010490">
    <property type="status" value="NOT_ANNOTATED_CDS"/>
    <property type="molecule type" value="Genomic_DNA"/>
</dbReference>
<dbReference type="EMBL" id="AC025173">
    <property type="status" value="NOT_ANNOTATED_CDS"/>
    <property type="molecule type" value="Genomic_DNA"/>
</dbReference>
<dbReference type="EMBL" id="AC093221">
    <property type="status" value="NOT_ANNOTATED_CDS"/>
    <property type="molecule type" value="Genomic_DNA"/>
</dbReference>
<dbReference type="EMBL" id="AC093303">
    <property type="status" value="NOT_ANNOTATED_CDS"/>
    <property type="molecule type" value="Genomic_DNA"/>
</dbReference>
<dbReference type="EMBL" id="AC094103">
    <property type="status" value="NOT_ANNOTATED_CDS"/>
    <property type="molecule type" value="Genomic_DNA"/>
</dbReference>
<dbReference type="EMBL" id="AC108128">
    <property type="status" value="NOT_ANNOTATED_CDS"/>
    <property type="molecule type" value="Genomic_DNA"/>
</dbReference>
<dbReference type="EMBL" id="AC109474">
    <property type="status" value="NOT_ANNOTATED_CDS"/>
    <property type="molecule type" value="Genomic_DNA"/>
</dbReference>
<dbReference type="EMBL" id="AC113350">
    <property type="status" value="NOT_ANNOTATED_CDS"/>
    <property type="molecule type" value="Genomic_DNA"/>
</dbReference>
<dbReference type="EMBL" id="AC113397">
    <property type="status" value="NOT_ANNOTATED_CDS"/>
    <property type="molecule type" value="Genomic_DNA"/>
</dbReference>
<dbReference type="EMBL" id="AC118463">
    <property type="status" value="NOT_ANNOTATED_CDS"/>
    <property type="molecule type" value="Genomic_DNA"/>
</dbReference>
<dbReference type="EMBL" id="CH471168">
    <property type="protein sequence ID" value="EAW68851.1"/>
    <property type="molecule type" value="Genomic_DNA"/>
</dbReference>
<dbReference type="EMBL" id="BC031051">
    <property type="protein sequence ID" value="AAH31051.1"/>
    <property type="molecule type" value="mRNA"/>
</dbReference>
<dbReference type="CCDS" id="CCDS3889.1">
    <molecule id="Q13634-1"/>
</dbReference>
<dbReference type="CCDS" id="CCDS54835.1">
    <molecule id="Q13634-2"/>
</dbReference>
<dbReference type="PIR" id="G02678">
    <property type="entry name" value="G02678"/>
</dbReference>
<dbReference type="RefSeq" id="NP_001161139.1">
    <molecule id="Q13634-2"/>
    <property type="nucleotide sequence ID" value="NM_001167667.3"/>
</dbReference>
<dbReference type="RefSeq" id="NP_001278885.1">
    <molecule id="Q13634-1"/>
    <property type="nucleotide sequence ID" value="NM_001291956.3"/>
</dbReference>
<dbReference type="RefSeq" id="NP_001336485.1">
    <molecule id="Q13634-1"/>
    <property type="nucleotide sequence ID" value="NM_001349556.2"/>
</dbReference>
<dbReference type="RefSeq" id="NP_001336487.1">
    <molecule id="Q13634-1"/>
    <property type="nucleotide sequence ID" value="NM_001349558.2"/>
</dbReference>
<dbReference type="RefSeq" id="NP_001336488.1">
    <molecule id="Q13634-1"/>
    <property type="nucleotide sequence ID" value="NM_001349559.2"/>
</dbReference>
<dbReference type="RefSeq" id="NP_001336490.1">
    <molecule id="Q13634-2"/>
    <property type="nucleotide sequence ID" value="NM_001349561.2"/>
</dbReference>
<dbReference type="RefSeq" id="NP_004925.1">
    <molecule id="Q13634-1"/>
    <property type="nucleotide sequence ID" value="NM_004934.5"/>
</dbReference>
<dbReference type="RefSeq" id="XP_005248285.1">
    <molecule id="Q13634-1"/>
    <property type="nucleotide sequence ID" value="XM_005248228.5"/>
</dbReference>
<dbReference type="RefSeq" id="XP_006714498.1">
    <molecule id="Q13634-1"/>
    <property type="nucleotide sequence ID" value="XM_006714435.5"/>
</dbReference>
<dbReference type="RefSeq" id="XP_016864413.1">
    <molecule id="Q13634-1"/>
    <property type="nucleotide sequence ID" value="XM_017008924.3"/>
</dbReference>
<dbReference type="RefSeq" id="XP_016864414.1">
    <property type="nucleotide sequence ID" value="XM_017008925.1"/>
</dbReference>
<dbReference type="RefSeq" id="XP_016864415.1">
    <molecule id="Q13634-1"/>
    <property type="nucleotide sequence ID" value="XM_017008926.3"/>
</dbReference>
<dbReference type="RefSeq" id="XP_016864416.1">
    <molecule id="Q13634-1"/>
    <property type="nucleotide sequence ID" value="XM_017008927.3"/>
</dbReference>
<dbReference type="RefSeq" id="XP_016864417.1">
    <molecule id="Q13634-1"/>
    <property type="nucleotide sequence ID" value="XM_017008928.3"/>
</dbReference>
<dbReference type="RefSeq" id="XP_016864418.1">
    <molecule id="Q13634-1"/>
    <property type="nucleotide sequence ID" value="XM_017008929.3"/>
</dbReference>
<dbReference type="RefSeq" id="XP_016864419.1">
    <molecule id="Q13634-1"/>
    <property type="nucleotide sequence ID" value="XM_017008930.3"/>
</dbReference>
<dbReference type="RefSeq" id="XP_016864420.1">
    <property type="nucleotide sequence ID" value="XM_017008931.1"/>
</dbReference>
<dbReference type="RefSeq" id="XP_016864421.1">
    <property type="nucleotide sequence ID" value="XM_017008932.1"/>
</dbReference>
<dbReference type="RefSeq" id="XP_016864428.1">
    <property type="nucleotide sequence ID" value="XM_017008939.1"/>
</dbReference>
<dbReference type="RefSeq" id="XP_016864429.1">
    <property type="nucleotide sequence ID" value="XM_017008940.1"/>
</dbReference>
<dbReference type="RefSeq" id="XP_016864430.1">
    <property type="nucleotide sequence ID" value="XM_017008941.1"/>
</dbReference>
<dbReference type="RefSeq" id="XP_054207361.1">
    <molecule id="Q13634-1"/>
    <property type="nucleotide sequence ID" value="XM_054351386.1"/>
</dbReference>
<dbReference type="RefSeq" id="XP_054207362.1">
    <molecule id="Q13634-1"/>
    <property type="nucleotide sequence ID" value="XM_054351387.1"/>
</dbReference>
<dbReference type="RefSeq" id="XP_054207363.1">
    <molecule id="Q13634-1"/>
    <property type="nucleotide sequence ID" value="XM_054351388.1"/>
</dbReference>
<dbReference type="RefSeq" id="XP_054207364.1">
    <molecule id="Q13634-1"/>
    <property type="nucleotide sequence ID" value="XM_054351389.1"/>
</dbReference>
<dbReference type="RefSeq" id="XP_054207365.1">
    <molecule id="Q13634-1"/>
    <property type="nucleotide sequence ID" value="XM_054351390.1"/>
</dbReference>
<dbReference type="RefSeq" id="XP_054207366.1">
    <molecule id="Q13634-1"/>
    <property type="nucleotide sequence ID" value="XM_054351391.1"/>
</dbReference>
<dbReference type="RefSeq" id="XP_054207367.1">
    <molecule id="Q13634-1"/>
    <property type="nucleotide sequence ID" value="XM_054351392.1"/>
</dbReference>
<dbReference type="RefSeq" id="XP_054207368.1">
    <molecule id="Q13634-1"/>
    <property type="nucleotide sequence ID" value="XM_054351393.1"/>
</dbReference>
<dbReference type="SMR" id="Q13634"/>
<dbReference type="BioGRID" id="107451">
    <property type="interactions" value="5"/>
</dbReference>
<dbReference type="FunCoup" id="Q13634">
    <property type="interactions" value="148"/>
</dbReference>
<dbReference type="IntAct" id="Q13634">
    <property type="interactions" value="1"/>
</dbReference>
<dbReference type="STRING" id="9606.ENSP00000371710"/>
<dbReference type="GlyCosmos" id="Q13634">
    <property type="glycosylation" value="4 sites, No reported glycans"/>
</dbReference>
<dbReference type="GlyGen" id="Q13634">
    <property type="glycosylation" value="4 sites, 1 N-linked glycan (1 site)"/>
</dbReference>
<dbReference type="iPTMnet" id="Q13634"/>
<dbReference type="PhosphoSitePlus" id="Q13634"/>
<dbReference type="BioMuta" id="CDH18"/>
<dbReference type="DMDM" id="3023435"/>
<dbReference type="jPOST" id="Q13634"/>
<dbReference type="MassIVE" id="Q13634"/>
<dbReference type="PaxDb" id="9606-ENSP00000425093"/>
<dbReference type="PeptideAtlas" id="Q13634"/>
<dbReference type="ProteomicsDB" id="59625">
    <molecule id="Q13634-1"/>
</dbReference>
<dbReference type="ProteomicsDB" id="59626">
    <molecule id="Q13634-2"/>
</dbReference>
<dbReference type="TopDownProteomics" id="Q13634-1">
    <molecule id="Q13634-1"/>
</dbReference>
<dbReference type="Antibodypedia" id="2730">
    <property type="antibodies" value="169 antibodies from 30 providers"/>
</dbReference>
<dbReference type="DNASU" id="1016"/>
<dbReference type="Ensembl" id="ENST00000274170.8">
    <molecule id="Q13634-1"/>
    <property type="protein sequence ID" value="ENSP00000274170.3"/>
    <property type="gene ID" value="ENSG00000145526.12"/>
</dbReference>
<dbReference type="Ensembl" id="ENST00000382275.6">
    <molecule id="Q13634-1"/>
    <property type="protein sequence ID" value="ENSP00000371710.1"/>
    <property type="gene ID" value="ENSG00000145526.12"/>
</dbReference>
<dbReference type="Ensembl" id="ENST00000502796.5">
    <molecule id="Q13634-2"/>
    <property type="protein sequence ID" value="ENSP00000422138.1"/>
    <property type="gene ID" value="ENSG00000145526.12"/>
</dbReference>
<dbReference type="Ensembl" id="ENST00000507958.5">
    <molecule id="Q13634-1"/>
    <property type="protein sequence ID" value="ENSP00000425093.1"/>
    <property type="gene ID" value="ENSG00000145526.12"/>
</dbReference>
<dbReference type="GeneID" id="1016"/>
<dbReference type="KEGG" id="hsa:1016"/>
<dbReference type="MANE-Select" id="ENST00000382275.6">
    <property type="protein sequence ID" value="ENSP00000371710.1"/>
    <property type="RefSeq nucleotide sequence ID" value="NM_004934.5"/>
    <property type="RefSeq protein sequence ID" value="NP_004925.1"/>
</dbReference>
<dbReference type="UCSC" id="uc003jgc.4">
    <molecule id="Q13634-1"/>
    <property type="organism name" value="human"/>
</dbReference>
<dbReference type="AGR" id="HGNC:1757"/>
<dbReference type="CTD" id="1016"/>
<dbReference type="DisGeNET" id="1016"/>
<dbReference type="GeneCards" id="CDH18"/>
<dbReference type="HGNC" id="HGNC:1757">
    <property type="gene designation" value="CDH18"/>
</dbReference>
<dbReference type="HPA" id="ENSG00000145526">
    <property type="expression patterns" value="Tissue enhanced (adrenal gland, brain, pituitary gland)"/>
</dbReference>
<dbReference type="MalaCards" id="CDH18"/>
<dbReference type="MIM" id="603019">
    <property type="type" value="gene"/>
</dbReference>
<dbReference type="neXtProt" id="NX_Q13634"/>
<dbReference type="OpenTargets" id="ENSG00000145526"/>
<dbReference type="PharmGKB" id="PA26291"/>
<dbReference type="VEuPathDB" id="HostDB:ENSG00000145526"/>
<dbReference type="eggNOG" id="KOG3594">
    <property type="taxonomic scope" value="Eukaryota"/>
</dbReference>
<dbReference type="GeneTree" id="ENSGT00940000157512"/>
<dbReference type="HOGENOM" id="CLU_005284_3_0_1"/>
<dbReference type="InParanoid" id="Q13634"/>
<dbReference type="OMA" id="RTMQDVY"/>
<dbReference type="OrthoDB" id="6252479at2759"/>
<dbReference type="PAN-GO" id="Q13634">
    <property type="GO annotations" value="9 GO annotations based on evolutionary models"/>
</dbReference>
<dbReference type="PhylomeDB" id="Q13634"/>
<dbReference type="TreeFam" id="TF329887"/>
<dbReference type="PathwayCommons" id="Q13634"/>
<dbReference type="Reactome" id="R-HSA-418990">
    <property type="pathway name" value="Adherens junctions interactions"/>
</dbReference>
<dbReference type="SignaLink" id="Q13634"/>
<dbReference type="SIGNOR" id="Q13634"/>
<dbReference type="BioGRID-ORCS" id="1016">
    <property type="hits" value="8 hits in 1146 CRISPR screens"/>
</dbReference>
<dbReference type="ChiTaRS" id="CDH18">
    <property type="organism name" value="human"/>
</dbReference>
<dbReference type="GenomeRNAi" id="1016"/>
<dbReference type="Pharos" id="Q13634">
    <property type="development level" value="Tbio"/>
</dbReference>
<dbReference type="PRO" id="PR:Q13634"/>
<dbReference type="Proteomes" id="UP000005640">
    <property type="component" value="Chromosome 5"/>
</dbReference>
<dbReference type="RNAct" id="Q13634">
    <property type="molecule type" value="protein"/>
</dbReference>
<dbReference type="Bgee" id="ENSG00000145526">
    <property type="expression patterns" value="Expressed in middle temporal gyrus and 139 other cell types or tissues"/>
</dbReference>
<dbReference type="ExpressionAtlas" id="Q13634">
    <property type="expression patterns" value="baseline and differential"/>
</dbReference>
<dbReference type="GO" id="GO:0005912">
    <property type="term" value="C:adherens junction"/>
    <property type="evidence" value="ECO:0000318"/>
    <property type="project" value="GO_Central"/>
</dbReference>
<dbReference type="GO" id="GO:0016342">
    <property type="term" value="C:catenin complex"/>
    <property type="evidence" value="ECO:0000318"/>
    <property type="project" value="GO_Central"/>
</dbReference>
<dbReference type="GO" id="GO:0005886">
    <property type="term" value="C:plasma membrane"/>
    <property type="evidence" value="ECO:0000304"/>
    <property type="project" value="Reactome"/>
</dbReference>
<dbReference type="GO" id="GO:0008013">
    <property type="term" value="F:beta-catenin binding"/>
    <property type="evidence" value="ECO:0000318"/>
    <property type="project" value="GO_Central"/>
</dbReference>
<dbReference type="GO" id="GO:0045296">
    <property type="term" value="F:cadherin binding"/>
    <property type="evidence" value="ECO:0000318"/>
    <property type="project" value="GO_Central"/>
</dbReference>
<dbReference type="GO" id="GO:0005509">
    <property type="term" value="F:calcium ion binding"/>
    <property type="evidence" value="ECO:0007669"/>
    <property type="project" value="InterPro"/>
</dbReference>
<dbReference type="GO" id="GO:0034332">
    <property type="term" value="P:adherens junction organization"/>
    <property type="evidence" value="ECO:0000318"/>
    <property type="project" value="GO_Central"/>
</dbReference>
<dbReference type="GO" id="GO:0016339">
    <property type="term" value="P:calcium-dependent cell-cell adhesion via plasma membrane cell adhesion molecules"/>
    <property type="evidence" value="ECO:0000318"/>
    <property type="project" value="GO_Central"/>
</dbReference>
<dbReference type="GO" id="GO:0016477">
    <property type="term" value="P:cell migration"/>
    <property type="evidence" value="ECO:0000318"/>
    <property type="project" value="GO_Central"/>
</dbReference>
<dbReference type="GO" id="GO:0000902">
    <property type="term" value="P:cell morphogenesis"/>
    <property type="evidence" value="ECO:0000318"/>
    <property type="project" value="GO_Central"/>
</dbReference>
<dbReference type="GO" id="GO:0044331">
    <property type="term" value="P:cell-cell adhesion mediated by cadherin"/>
    <property type="evidence" value="ECO:0000318"/>
    <property type="project" value="GO_Central"/>
</dbReference>
<dbReference type="GO" id="GO:0007043">
    <property type="term" value="P:cell-cell junction assembly"/>
    <property type="evidence" value="ECO:0000318"/>
    <property type="project" value="GO_Central"/>
</dbReference>
<dbReference type="GO" id="GO:0007156">
    <property type="term" value="P:homophilic cell adhesion via plasma membrane adhesion molecules"/>
    <property type="evidence" value="ECO:0007669"/>
    <property type="project" value="InterPro"/>
</dbReference>
<dbReference type="CDD" id="cd11304">
    <property type="entry name" value="Cadherin_repeat"/>
    <property type="match status" value="5"/>
</dbReference>
<dbReference type="FunFam" id="4.10.900.10:FF:000001">
    <property type="entry name" value="Cadherin 2"/>
    <property type="match status" value="1"/>
</dbReference>
<dbReference type="FunFam" id="2.60.40.60:FF:000008">
    <property type="entry name" value="Cadherin 24"/>
    <property type="match status" value="1"/>
</dbReference>
<dbReference type="FunFam" id="2.60.40.60:FF:000009">
    <property type="entry name" value="Cadherin 24"/>
    <property type="match status" value="1"/>
</dbReference>
<dbReference type="FunFam" id="2.60.40.60:FF:000012">
    <property type="entry name" value="Cadherin 24"/>
    <property type="match status" value="1"/>
</dbReference>
<dbReference type="FunFam" id="2.60.40.60:FF:000017">
    <property type="entry name" value="Cadherin 24"/>
    <property type="match status" value="1"/>
</dbReference>
<dbReference type="FunFam" id="2.60.40.60:FF:000014">
    <property type="entry name" value="Cadherin 8"/>
    <property type="match status" value="1"/>
</dbReference>
<dbReference type="Gene3D" id="2.60.40.60">
    <property type="entry name" value="Cadherins"/>
    <property type="match status" value="5"/>
</dbReference>
<dbReference type="Gene3D" id="4.10.900.10">
    <property type="entry name" value="TCF3-CBD (Catenin binding domain)"/>
    <property type="match status" value="1"/>
</dbReference>
<dbReference type="InterPro" id="IPR039808">
    <property type="entry name" value="Cadherin"/>
</dbReference>
<dbReference type="InterPro" id="IPR002126">
    <property type="entry name" value="Cadherin-like_dom"/>
</dbReference>
<dbReference type="InterPro" id="IPR015919">
    <property type="entry name" value="Cadherin-like_sf"/>
</dbReference>
<dbReference type="InterPro" id="IPR020894">
    <property type="entry name" value="Cadherin_CS"/>
</dbReference>
<dbReference type="InterPro" id="IPR000233">
    <property type="entry name" value="Cadherin_Y-type_LIR"/>
</dbReference>
<dbReference type="InterPro" id="IPR027397">
    <property type="entry name" value="Catenin-bd_sf"/>
</dbReference>
<dbReference type="PANTHER" id="PTHR24027:SF106">
    <property type="entry name" value="CADHERIN-18"/>
    <property type="match status" value="1"/>
</dbReference>
<dbReference type="PANTHER" id="PTHR24027">
    <property type="entry name" value="CADHERIN-23"/>
    <property type="match status" value="1"/>
</dbReference>
<dbReference type="Pfam" id="PF01049">
    <property type="entry name" value="CADH_Y-type_LIR"/>
    <property type="match status" value="1"/>
</dbReference>
<dbReference type="Pfam" id="PF00028">
    <property type="entry name" value="Cadherin"/>
    <property type="match status" value="5"/>
</dbReference>
<dbReference type="PRINTS" id="PR00205">
    <property type="entry name" value="CADHERIN"/>
</dbReference>
<dbReference type="SMART" id="SM00112">
    <property type="entry name" value="CA"/>
    <property type="match status" value="5"/>
</dbReference>
<dbReference type="SUPFAM" id="SSF49313">
    <property type="entry name" value="Cadherin-like"/>
    <property type="match status" value="5"/>
</dbReference>
<dbReference type="PROSITE" id="PS00232">
    <property type="entry name" value="CADHERIN_1"/>
    <property type="match status" value="3"/>
</dbReference>
<dbReference type="PROSITE" id="PS50268">
    <property type="entry name" value="CADHERIN_2"/>
    <property type="match status" value="5"/>
</dbReference>
<reference key="1">
    <citation type="journal article" date="1997" name="J. Biol. Chem.">
        <title>Identification of human cadherin-14, a novel neurally specific type II cadherin, by protein interaction cloning.</title>
        <authorList>
            <person name="Shibata T."/>
            <person name="Shimoyama Y."/>
            <person name="Gotoh M."/>
            <person name="Hirohashi S."/>
        </authorList>
    </citation>
    <scope>NUCLEOTIDE SEQUENCE [MRNA] (ISOFORM 1)</scope>
    <source>
        <tissue>Brain</tissue>
    </source>
</reference>
<reference key="2">
    <citation type="journal article" date="2004" name="Nat. Genet.">
        <title>Complete sequencing and characterization of 21,243 full-length human cDNAs.</title>
        <authorList>
            <person name="Ota T."/>
            <person name="Suzuki Y."/>
            <person name="Nishikawa T."/>
            <person name="Otsuki T."/>
            <person name="Sugiyama T."/>
            <person name="Irie R."/>
            <person name="Wakamatsu A."/>
            <person name="Hayashi K."/>
            <person name="Sato H."/>
            <person name="Nagai K."/>
            <person name="Kimura K."/>
            <person name="Makita H."/>
            <person name="Sekine M."/>
            <person name="Obayashi M."/>
            <person name="Nishi T."/>
            <person name="Shibahara T."/>
            <person name="Tanaka T."/>
            <person name="Ishii S."/>
            <person name="Yamamoto J."/>
            <person name="Saito K."/>
            <person name="Kawai Y."/>
            <person name="Isono Y."/>
            <person name="Nakamura Y."/>
            <person name="Nagahari K."/>
            <person name="Murakami K."/>
            <person name="Yasuda T."/>
            <person name="Iwayanagi T."/>
            <person name="Wagatsuma M."/>
            <person name="Shiratori A."/>
            <person name="Sudo H."/>
            <person name="Hosoiri T."/>
            <person name="Kaku Y."/>
            <person name="Kodaira H."/>
            <person name="Kondo H."/>
            <person name="Sugawara M."/>
            <person name="Takahashi M."/>
            <person name="Kanda K."/>
            <person name="Yokoi T."/>
            <person name="Furuya T."/>
            <person name="Kikkawa E."/>
            <person name="Omura Y."/>
            <person name="Abe K."/>
            <person name="Kamihara K."/>
            <person name="Katsuta N."/>
            <person name="Sato K."/>
            <person name="Tanikawa M."/>
            <person name="Yamazaki M."/>
            <person name="Ninomiya K."/>
            <person name="Ishibashi T."/>
            <person name="Yamashita H."/>
            <person name="Murakawa K."/>
            <person name="Fujimori K."/>
            <person name="Tanai H."/>
            <person name="Kimata M."/>
            <person name="Watanabe M."/>
            <person name="Hiraoka S."/>
            <person name="Chiba Y."/>
            <person name="Ishida S."/>
            <person name="Ono Y."/>
            <person name="Takiguchi S."/>
            <person name="Watanabe S."/>
            <person name="Yosida M."/>
            <person name="Hotuta T."/>
            <person name="Kusano J."/>
            <person name="Kanehori K."/>
            <person name="Takahashi-Fujii A."/>
            <person name="Hara H."/>
            <person name="Tanase T.-O."/>
            <person name="Nomura Y."/>
            <person name="Togiya S."/>
            <person name="Komai F."/>
            <person name="Hara R."/>
            <person name="Takeuchi K."/>
            <person name="Arita M."/>
            <person name="Imose N."/>
            <person name="Musashino K."/>
            <person name="Yuuki H."/>
            <person name="Oshima A."/>
            <person name="Sasaki N."/>
            <person name="Aotsuka S."/>
            <person name="Yoshikawa Y."/>
            <person name="Matsunawa H."/>
            <person name="Ichihara T."/>
            <person name="Shiohata N."/>
            <person name="Sano S."/>
            <person name="Moriya S."/>
            <person name="Momiyama H."/>
            <person name="Satoh N."/>
            <person name="Takami S."/>
            <person name="Terashima Y."/>
            <person name="Suzuki O."/>
            <person name="Nakagawa S."/>
            <person name="Senoh A."/>
            <person name="Mizoguchi H."/>
            <person name="Goto Y."/>
            <person name="Shimizu F."/>
            <person name="Wakebe H."/>
            <person name="Hishigaki H."/>
            <person name="Watanabe T."/>
            <person name="Sugiyama A."/>
            <person name="Takemoto M."/>
            <person name="Kawakami B."/>
            <person name="Yamazaki M."/>
            <person name="Watanabe K."/>
            <person name="Kumagai A."/>
            <person name="Itakura S."/>
            <person name="Fukuzumi Y."/>
            <person name="Fujimori Y."/>
            <person name="Komiyama M."/>
            <person name="Tashiro H."/>
            <person name="Tanigami A."/>
            <person name="Fujiwara T."/>
            <person name="Ono T."/>
            <person name="Yamada K."/>
            <person name="Fujii Y."/>
            <person name="Ozaki K."/>
            <person name="Hirao M."/>
            <person name="Ohmori Y."/>
            <person name="Kawabata A."/>
            <person name="Hikiji T."/>
            <person name="Kobatake N."/>
            <person name="Inagaki H."/>
            <person name="Ikema Y."/>
            <person name="Okamoto S."/>
            <person name="Okitani R."/>
            <person name="Kawakami T."/>
            <person name="Noguchi S."/>
            <person name="Itoh T."/>
            <person name="Shigeta K."/>
            <person name="Senba T."/>
            <person name="Matsumura K."/>
            <person name="Nakajima Y."/>
            <person name="Mizuno T."/>
            <person name="Morinaga M."/>
            <person name="Sasaki M."/>
            <person name="Togashi T."/>
            <person name="Oyama M."/>
            <person name="Hata H."/>
            <person name="Watanabe M."/>
            <person name="Komatsu T."/>
            <person name="Mizushima-Sugano J."/>
            <person name="Satoh T."/>
            <person name="Shirai Y."/>
            <person name="Takahashi Y."/>
            <person name="Nakagawa K."/>
            <person name="Okumura K."/>
            <person name="Nagase T."/>
            <person name="Nomura N."/>
            <person name="Kikuchi H."/>
            <person name="Masuho Y."/>
            <person name="Yamashita R."/>
            <person name="Nakai K."/>
            <person name="Yada T."/>
            <person name="Nakamura Y."/>
            <person name="Ohara O."/>
            <person name="Isogai T."/>
            <person name="Sugano S."/>
        </authorList>
    </citation>
    <scope>NUCLEOTIDE SEQUENCE [LARGE SCALE MRNA] (ISOFORMS 1 AND 2)</scope>
    <source>
        <tissue>Brain</tissue>
        <tissue>Cerebellum</tissue>
    </source>
</reference>
<reference key="3">
    <citation type="journal article" date="2004" name="Nature">
        <title>The DNA sequence and comparative analysis of human chromosome 5.</title>
        <authorList>
            <person name="Schmutz J."/>
            <person name="Martin J."/>
            <person name="Terry A."/>
            <person name="Couronne O."/>
            <person name="Grimwood J."/>
            <person name="Lowry S."/>
            <person name="Gordon L.A."/>
            <person name="Scott D."/>
            <person name="Xie G."/>
            <person name="Huang W."/>
            <person name="Hellsten U."/>
            <person name="Tran-Gyamfi M."/>
            <person name="She X."/>
            <person name="Prabhakar S."/>
            <person name="Aerts A."/>
            <person name="Altherr M."/>
            <person name="Bajorek E."/>
            <person name="Black S."/>
            <person name="Branscomb E."/>
            <person name="Caoile C."/>
            <person name="Challacombe J.F."/>
            <person name="Chan Y.M."/>
            <person name="Denys M."/>
            <person name="Detter J.C."/>
            <person name="Escobar J."/>
            <person name="Flowers D."/>
            <person name="Fotopulos D."/>
            <person name="Glavina T."/>
            <person name="Gomez M."/>
            <person name="Gonzales E."/>
            <person name="Goodstein D."/>
            <person name="Grigoriev I."/>
            <person name="Groza M."/>
            <person name="Hammon N."/>
            <person name="Hawkins T."/>
            <person name="Haydu L."/>
            <person name="Israni S."/>
            <person name="Jett J."/>
            <person name="Kadner K."/>
            <person name="Kimball H."/>
            <person name="Kobayashi A."/>
            <person name="Lopez F."/>
            <person name="Lou Y."/>
            <person name="Martinez D."/>
            <person name="Medina C."/>
            <person name="Morgan J."/>
            <person name="Nandkeshwar R."/>
            <person name="Noonan J.P."/>
            <person name="Pitluck S."/>
            <person name="Pollard M."/>
            <person name="Predki P."/>
            <person name="Priest J."/>
            <person name="Ramirez L."/>
            <person name="Retterer J."/>
            <person name="Rodriguez A."/>
            <person name="Rogers S."/>
            <person name="Salamov A."/>
            <person name="Salazar A."/>
            <person name="Thayer N."/>
            <person name="Tice H."/>
            <person name="Tsai M."/>
            <person name="Ustaszewska A."/>
            <person name="Vo N."/>
            <person name="Wheeler J."/>
            <person name="Wu K."/>
            <person name="Yang J."/>
            <person name="Dickson M."/>
            <person name="Cheng J.-F."/>
            <person name="Eichler E.E."/>
            <person name="Olsen A."/>
            <person name="Pennacchio L.A."/>
            <person name="Rokhsar D.S."/>
            <person name="Richardson P."/>
            <person name="Lucas S.M."/>
            <person name="Myers R.M."/>
            <person name="Rubin E.M."/>
        </authorList>
    </citation>
    <scope>NUCLEOTIDE SEQUENCE [LARGE SCALE GENOMIC DNA]</scope>
</reference>
<reference key="4">
    <citation type="submission" date="2005-09" db="EMBL/GenBank/DDBJ databases">
        <authorList>
            <person name="Mural R.J."/>
            <person name="Istrail S."/>
            <person name="Sutton G.G."/>
            <person name="Florea L."/>
            <person name="Halpern A.L."/>
            <person name="Mobarry C.M."/>
            <person name="Lippert R."/>
            <person name="Walenz B."/>
            <person name="Shatkay H."/>
            <person name="Dew I."/>
            <person name="Miller J.R."/>
            <person name="Flanigan M.J."/>
            <person name="Edwards N.J."/>
            <person name="Bolanos R."/>
            <person name="Fasulo D."/>
            <person name="Halldorsson B.V."/>
            <person name="Hannenhalli S."/>
            <person name="Turner R."/>
            <person name="Yooseph S."/>
            <person name="Lu F."/>
            <person name="Nusskern D.R."/>
            <person name="Shue B.C."/>
            <person name="Zheng X.H."/>
            <person name="Zhong F."/>
            <person name="Delcher A.L."/>
            <person name="Huson D.H."/>
            <person name="Kravitz S.A."/>
            <person name="Mouchard L."/>
            <person name="Reinert K."/>
            <person name="Remington K.A."/>
            <person name="Clark A.G."/>
            <person name="Waterman M.S."/>
            <person name="Eichler E.E."/>
            <person name="Adams M.D."/>
            <person name="Hunkapiller M.W."/>
            <person name="Myers E.W."/>
            <person name="Venter J.C."/>
        </authorList>
    </citation>
    <scope>NUCLEOTIDE SEQUENCE [LARGE SCALE GENOMIC DNA]</scope>
</reference>
<reference key="5">
    <citation type="journal article" date="2004" name="Genome Res.">
        <title>The status, quality, and expansion of the NIH full-length cDNA project: the Mammalian Gene Collection (MGC).</title>
        <authorList>
            <consortium name="The MGC Project Team"/>
        </authorList>
    </citation>
    <scope>NUCLEOTIDE SEQUENCE [LARGE SCALE MRNA] (ISOFORM 1)</scope>
    <source>
        <tissue>Brain</tissue>
    </source>
</reference>
<organism>
    <name type="scientific">Homo sapiens</name>
    <name type="common">Human</name>
    <dbReference type="NCBI Taxonomy" id="9606"/>
    <lineage>
        <taxon>Eukaryota</taxon>
        <taxon>Metazoa</taxon>
        <taxon>Chordata</taxon>
        <taxon>Craniata</taxon>
        <taxon>Vertebrata</taxon>
        <taxon>Euteleostomi</taxon>
        <taxon>Mammalia</taxon>
        <taxon>Eutheria</taxon>
        <taxon>Euarchontoglires</taxon>
        <taxon>Primates</taxon>
        <taxon>Haplorrhini</taxon>
        <taxon>Catarrhini</taxon>
        <taxon>Hominidae</taxon>
        <taxon>Homo</taxon>
    </lineage>
</organism>